<sequence length="544" mass="61056">MGSDGSSLSPKVSQPGHTEIVDHVSEKVITNGKNVNKKVNAEVDGKSMVEKVKTHEENAEDYHYGGYHPVYIGEEFHHRRYVVERKLGWGHFSTVWLAYDRAAKRRVALKVVRSAEHYRETSIDEIRILQKIREGDEKHLGKKHIISLLDYFVHRGPNGAHVCMVFEVLGENLLSLIQSYGHRGVPVGIVKQIAYQLLIALDYLHRECGIIHTDLKPENVLICIDQDALQHIEAPATTSSPTSNTSSSKTRNNTGYTAKAPIIKRGQSVDNSAQERKTFAKNPTKNSKPAGQVIPSSPFTSTLSRFPSLEGAVSEISLRDSQKHNSHPNSPFSSGDNSLILDGVNGSQEPVPKITVKIADLGNACWTRKHFTNDVQTRQYRSPEVILGCRWGASADCWSFACIIFELLTGDYLFDPRNGNSYSKEDDHIAQIIELLVNYPKQMALSGKHSRDLFNRRGELRNIHKLKFWPLKDVLEQKYHFSAELAQQISDFLSPMLCFDPAKRTNAGYMSNSPWLREVADPTFKIETTGATGEDVPGWATEIR</sequence>
<protein>
    <recommendedName>
        <fullName>Protein kinase dsk1</fullName>
        <ecNumber>2.7.11.1</ecNumber>
    </recommendedName>
    <alternativeName>
        <fullName>Dis1-suppressing protein kinase</fullName>
    </alternativeName>
</protein>
<dbReference type="EC" id="2.7.11.1"/>
<dbReference type="EMBL" id="D13447">
    <property type="protein sequence ID" value="BAA02706.1"/>
    <property type="molecule type" value="Genomic_DNA"/>
</dbReference>
<dbReference type="EMBL" id="CU329671">
    <property type="protein sequence ID" value="CAA19180.1"/>
    <property type="molecule type" value="Genomic_DNA"/>
</dbReference>
<dbReference type="PIR" id="A47726">
    <property type="entry name" value="A47726"/>
</dbReference>
<dbReference type="RefSeq" id="NP_595327.1">
    <property type="nucleotide sequence ID" value="NM_001021234.2"/>
</dbReference>
<dbReference type="SMR" id="P36616"/>
<dbReference type="BioGRID" id="276395">
    <property type="interactions" value="268"/>
</dbReference>
<dbReference type="FunCoup" id="P36616">
    <property type="interactions" value="373"/>
</dbReference>
<dbReference type="STRING" id="284812.P36616"/>
<dbReference type="iPTMnet" id="P36616"/>
<dbReference type="PaxDb" id="4896-SPBC530.14c.1"/>
<dbReference type="EnsemblFungi" id="SPBC530.14c.1">
    <property type="protein sequence ID" value="SPBC530.14c.1:pep"/>
    <property type="gene ID" value="SPBC530.14c"/>
</dbReference>
<dbReference type="GeneID" id="2539847"/>
<dbReference type="KEGG" id="spo:2539847"/>
<dbReference type="PomBase" id="SPBC530.14c">
    <property type="gene designation" value="dsk1"/>
</dbReference>
<dbReference type="VEuPathDB" id="FungiDB:SPBC530.14c"/>
<dbReference type="eggNOG" id="KOG1290">
    <property type="taxonomic scope" value="Eukaryota"/>
</dbReference>
<dbReference type="HOGENOM" id="CLU_000288_81_12_1"/>
<dbReference type="InParanoid" id="P36616"/>
<dbReference type="OMA" id="HEGQRPP"/>
<dbReference type="PhylomeDB" id="P36616"/>
<dbReference type="BRENDA" id="2.7.11.1">
    <property type="organism ID" value="5613"/>
</dbReference>
<dbReference type="PRO" id="PR:P36616"/>
<dbReference type="Proteomes" id="UP000002485">
    <property type="component" value="Chromosome II"/>
</dbReference>
<dbReference type="GO" id="GO:0032153">
    <property type="term" value="C:cell division site"/>
    <property type="evidence" value="ECO:0000314"/>
    <property type="project" value="PomBase"/>
</dbReference>
<dbReference type="GO" id="GO:0005737">
    <property type="term" value="C:cytoplasm"/>
    <property type="evidence" value="ECO:0000314"/>
    <property type="project" value="PomBase"/>
</dbReference>
<dbReference type="GO" id="GO:0005829">
    <property type="term" value="C:cytosol"/>
    <property type="evidence" value="ECO:0000314"/>
    <property type="project" value="PomBase"/>
</dbReference>
<dbReference type="GO" id="GO:0044732">
    <property type="term" value="C:mitotic spindle pole body"/>
    <property type="evidence" value="ECO:0007005"/>
    <property type="project" value="PomBase"/>
</dbReference>
<dbReference type="GO" id="GO:0005634">
    <property type="term" value="C:nucleus"/>
    <property type="evidence" value="ECO:0000314"/>
    <property type="project" value="PomBase"/>
</dbReference>
<dbReference type="GO" id="GO:0005681">
    <property type="term" value="C:spliceosomal complex"/>
    <property type="evidence" value="ECO:0000314"/>
    <property type="project" value="PomBase"/>
</dbReference>
<dbReference type="GO" id="GO:0005524">
    <property type="term" value="F:ATP binding"/>
    <property type="evidence" value="ECO:0007669"/>
    <property type="project" value="UniProtKB-KW"/>
</dbReference>
<dbReference type="GO" id="GO:0106310">
    <property type="term" value="F:protein serine kinase activity"/>
    <property type="evidence" value="ECO:0007669"/>
    <property type="project" value="RHEA"/>
</dbReference>
<dbReference type="GO" id="GO:0004674">
    <property type="term" value="F:protein serine/threonine kinase activity"/>
    <property type="evidence" value="ECO:0000314"/>
    <property type="project" value="PomBase"/>
</dbReference>
<dbReference type="GO" id="GO:0051301">
    <property type="term" value="P:cell division"/>
    <property type="evidence" value="ECO:0007669"/>
    <property type="project" value="UniProtKB-KW"/>
</dbReference>
<dbReference type="GO" id="GO:0035556">
    <property type="term" value="P:intracellular signal transduction"/>
    <property type="evidence" value="ECO:0000303"/>
    <property type="project" value="PomBase"/>
</dbReference>
<dbReference type="GO" id="GO:0018105">
    <property type="term" value="P:peptidyl-serine phosphorylation"/>
    <property type="evidence" value="ECO:0000316"/>
    <property type="project" value="CACAO"/>
</dbReference>
<dbReference type="GO" id="GO:0048026">
    <property type="term" value="P:positive regulation of mRNA splicing, via spliceosome"/>
    <property type="evidence" value="ECO:0000315"/>
    <property type="project" value="PomBase"/>
</dbReference>
<dbReference type="GO" id="GO:0007088">
    <property type="term" value="P:regulation of mitotic nuclear division"/>
    <property type="evidence" value="ECO:0000315"/>
    <property type="project" value="PomBase"/>
</dbReference>
<dbReference type="GO" id="GO:0050684">
    <property type="term" value="P:regulation of mRNA processing"/>
    <property type="evidence" value="ECO:0000318"/>
    <property type="project" value="GO_Central"/>
</dbReference>
<dbReference type="GO" id="GO:0000245">
    <property type="term" value="P:spliceosomal complex assembly"/>
    <property type="evidence" value="ECO:0000318"/>
    <property type="project" value="GO_Central"/>
</dbReference>
<dbReference type="CDD" id="cd14136">
    <property type="entry name" value="STKc_SRPK"/>
    <property type="match status" value="1"/>
</dbReference>
<dbReference type="FunFam" id="3.30.200.20:FF:001333">
    <property type="entry name" value="Protein kinase, putative (AFU_orthologue AFUA_7G00740)"/>
    <property type="match status" value="1"/>
</dbReference>
<dbReference type="FunFam" id="1.10.510.10:FF:000591">
    <property type="entry name" value="Serine protein kinase Sky1"/>
    <property type="match status" value="1"/>
</dbReference>
<dbReference type="Gene3D" id="3.30.200.20">
    <property type="entry name" value="Phosphorylase Kinase, domain 1"/>
    <property type="match status" value="1"/>
</dbReference>
<dbReference type="Gene3D" id="1.10.510.10">
    <property type="entry name" value="Transferase(Phosphotransferase) domain 1"/>
    <property type="match status" value="1"/>
</dbReference>
<dbReference type="InterPro" id="IPR011009">
    <property type="entry name" value="Kinase-like_dom_sf"/>
</dbReference>
<dbReference type="InterPro" id="IPR000719">
    <property type="entry name" value="Prot_kinase_dom"/>
</dbReference>
<dbReference type="InterPro" id="IPR017441">
    <property type="entry name" value="Protein_kinase_ATP_BS"/>
</dbReference>
<dbReference type="InterPro" id="IPR008271">
    <property type="entry name" value="Ser/Thr_kinase_AS"/>
</dbReference>
<dbReference type="InterPro" id="IPR051334">
    <property type="entry name" value="SRPK"/>
</dbReference>
<dbReference type="PANTHER" id="PTHR47634">
    <property type="entry name" value="PROTEIN KINASE DOMAIN-CONTAINING PROTEIN-RELATED"/>
    <property type="match status" value="1"/>
</dbReference>
<dbReference type="PANTHER" id="PTHR47634:SF9">
    <property type="entry name" value="PROTEIN KINASE DOMAIN-CONTAINING PROTEIN-RELATED"/>
    <property type="match status" value="1"/>
</dbReference>
<dbReference type="Pfam" id="PF00069">
    <property type="entry name" value="Pkinase"/>
    <property type="match status" value="2"/>
</dbReference>
<dbReference type="SMART" id="SM00220">
    <property type="entry name" value="S_TKc"/>
    <property type="match status" value="1"/>
</dbReference>
<dbReference type="SUPFAM" id="SSF56112">
    <property type="entry name" value="Protein kinase-like (PK-like)"/>
    <property type="match status" value="1"/>
</dbReference>
<dbReference type="PROSITE" id="PS00107">
    <property type="entry name" value="PROTEIN_KINASE_ATP"/>
    <property type="match status" value="1"/>
</dbReference>
<dbReference type="PROSITE" id="PS50011">
    <property type="entry name" value="PROTEIN_KINASE_DOM"/>
    <property type="match status" value="1"/>
</dbReference>
<dbReference type="PROSITE" id="PS00108">
    <property type="entry name" value="PROTEIN_KINASE_ST"/>
    <property type="match status" value="1"/>
</dbReference>
<accession>P36616</accession>
<accession>O59749</accession>
<keyword id="KW-0067">ATP-binding</keyword>
<keyword id="KW-0131">Cell cycle</keyword>
<keyword id="KW-0132">Cell division</keyword>
<keyword id="KW-0963">Cytoplasm</keyword>
<keyword id="KW-0418">Kinase</keyword>
<keyword id="KW-0498">Mitosis</keyword>
<keyword id="KW-0547">Nucleotide-binding</keyword>
<keyword id="KW-0539">Nucleus</keyword>
<keyword id="KW-0597">Phosphoprotein</keyword>
<keyword id="KW-1185">Reference proteome</keyword>
<keyword id="KW-0723">Serine/threonine-protein kinase</keyword>
<keyword id="KW-0808">Transferase</keyword>
<name>DSK1_SCHPO</name>
<comment type="function">
    <text evidence="4 5">May play an important role in mitotic control by altering cellular location, degree of phosphorylation and kinase activity. Abundant expression accelerates the exit when cells are in M-phase and also delays the entry into mitosis when cells are in G2. Phosphorylates prp2 in vitro and so may have a role in co-ordinating pre-mRNA splicing with the progression of the cell division cycle.</text>
</comment>
<comment type="catalytic activity">
    <reaction>
        <text>L-seryl-[protein] + ATP = O-phospho-L-seryl-[protein] + ADP + H(+)</text>
        <dbReference type="Rhea" id="RHEA:17989"/>
        <dbReference type="Rhea" id="RHEA-COMP:9863"/>
        <dbReference type="Rhea" id="RHEA-COMP:11604"/>
        <dbReference type="ChEBI" id="CHEBI:15378"/>
        <dbReference type="ChEBI" id="CHEBI:29999"/>
        <dbReference type="ChEBI" id="CHEBI:30616"/>
        <dbReference type="ChEBI" id="CHEBI:83421"/>
        <dbReference type="ChEBI" id="CHEBI:456216"/>
        <dbReference type="EC" id="2.7.11.1"/>
    </reaction>
</comment>
<comment type="catalytic activity">
    <reaction>
        <text>L-threonyl-[protein] + ATP = O-phospho-L-threonyl-[protein] + ADP + H(+)</text>
        <dbReference type="Rhea" id="RHEA:46608"/>
        <dbReference type="Rhea" id="RHEA-COMP:11060"/>
        <dbReference type="Rhea" id="RHEA-COMP:11605"/>
        <dbReference type="ChEBI" id="CHEBI:15378"/>
        <dbReference type="ChEBI" id="CHEBI:30013"/>
        <dbReference type="ChEBI" id="CHEBI:30616"/>
        <dbReference type="ChEBI" id="CHEBI:61977"/>
        <dbReference type="ChEBI" id="CHEBI:456216"/>
        <dbReference type="EC" id="2.7.11.1"/>
    </reaction>
</comment>
<comment type="subcellular location">
    <subcellularLocation>
        <location evidence="4">Cytoplasm</location>
    </subcellularLocation>
    <subcellularLocation>
        <location evidence="4">Nucleus</location>
    </subcellularLocation>
    <text>Enriched in the nucleus in mitotically arrested mutant and wild-type mitotic cells but cytoplasmic enriched in cells at other cell-cycle stages.</text>
</comment>
<comment type="PTM">
    <text>Phosphorylated on Ser residue(s).</text>
</comment>
<comment type="similarity">
    <text evidence="1">Belongs to the protein kinase superfamily. Ser/Thr protein kinase family.</text>
</comment>
<evidence type="ECO:0000255" key="1">
    <source>
        <dbReference type="PROSITE-ProRule" id="PRU00159"/>
    </source>
</evidence>
<evidence type="ECO:0000255" key="2">
    <source>
        <dbReference type="PROSITE-ProRule" id="PRU10027"/>
    </source>
</evidence>
<evidence type="ECO:0000256" key="3">
    <source>
        <dbReference type="SAM" id="MobiDB-lite"/>
    </source>
</evidence>
<evidence type="ECO:0000269" key="4">
    <source>
    </source>
</evidence>
<evidence type="ECO:0000269" key="5">
    <source>
    </source>
</evidence>
<evidence type="ECO:0000305" key="6"/>
<feature type="chain" id="PRO_0000085927" description="Protein kinase dsk1">
    <location>
        <begin position="1"/>
        <end position="544"/>
    </location>
</feature>
<feature type="domain" description="Protein kinase" evidence="1">
    <location>
        <begin position="81"/>
        <end position="516"/>
    </location>
</feature>
<feature type="region of interest" description="Disordered" evidence="3">
    <location>
        <begin position="235"/>
        <end position="299"/>
    </location>
</feature>
<feature type="region of interest" description="Disordered" evidence="3">
    <location>
        <begin position="316"/>
        <end position="341"/>
    </location>
</feature>
<feature type="compositionally biased region" description="Low complexity" evidence="3">
    <location>
        <begin position="237"/>
        <end position="254"/>
    </location>
</feature>
<feature type="compositionally biased region" description="Polar residues" evidence="3">
    <location>
        <begin position="281"/>
        <end position="299"/>
    </location>
</feature>
<feature type="compositionally biased region" description="Polar residues" evidence="3">
    <location>
        <begin position="327"/>
        <end position="337"/>
    </location>
</feature>
<feature type="active site" description="Proton acceptor" evidence="1 2">
    <location>
        <position position="214"/>
    </location>
</feature>
<feature type="binding site" evidence="1">
    <location>
        <begin position="87"/>
        <end position="95"/>
    </location>
    <ligand>
        <name>ATP</name>
        <dbReference type="ChEBI" id="CHEBI:30616"/>
    </ligand>
</feature>
<feature type="binding site" evidence="1">
    <location>
        <position position="110"/>
    </location>
    <ligand>
        <name>ATP</name>
        <dbReference type="ChEBI" id="CHEBI:30616"/>
    </ligand>
</feature>
<feature type="sequence conflict" description="In Ref. 1; BAA02706." evidence="6" ref="1">
    <original>A</original>
    <variation>S</variation>
    <location>
        <position position="41"/>
    </location>
</feature>
<organism>
    <name type="scientific">Schizosaccharomyces pombe (strain 972 / ATCC 24843)</name>
    <name type="common">Fission yeast</name>
    <dbReference type="NCBI Taxonomy" id="284812"/>
    <lineage>
        <taxon>Eukaryota</taxon>
        <taxon>Fungi</taxon>
        <taxon>Dikarya</taxon>
        <taxon>Ascomycota</taxon>
        <taxon>Taphrinomycotina</taxon>
        <taxon>Schizosaccharomycetes</taxon>
        <taxon>Schizosaccharomycetales</taxon>
        <taxon>Schizosaccharomycetaceae</taxon>
        <taxon>Schizosaccharomyces</taxon>
    </lineage>
</organism>
<proteinExistence type="inferred from homology"/>
<gene>
    <name type="primary">dsk1</name>
    <name type="ORF">SPBC530.14c</name>
</gene>
<reference key="1">
    <citation type="journal article" date="1993" name="Mol. Biol. Cell">
        <title>A mitotic role for a novel fission yeast protein kinase dsk1 with cell cycle stage dependent phosphorylation and localization.</title>
        <authorList>
            <person name="Takeuchi M."/>
            <person name="Yanagida M."/>
        </authorList>
    </citation>
    <scope>NUCLEOTIDE SEQUENCE [GENOMIC DNA]</scope>
    <scope>FUNCTION</scope>
    <scope>SUBCELLULAR LOCATION</scope>
</reference>
<reference key="2">
    <citation type="journal article" date="2002" name="Nature">
        <title>The genome sequence of Schizosaccharomyces pombe.</title>
        <authorList>
            <person name="Wood V."/>
            <person name="Gwilliam R."/>
            <person name="Rajandream M.A."/>
            <person name="Lyne M.H."/>
            <person name="Lyne R."/>
            <person name="Stewart A."/>
            <person name="Sgouros J.G."/>
            <person name="Peat N."/>
            <person name="Hayles J."/>
            <person name="Baker S.G."/>
            <person name="Basham D."/>
            <person name="Bowman S."/>
            <person name="Brooks K."/>
            <person name="Brown D."/>
            <person name="Brown S."/>
            <person name="Chillingworth T."/>
            <person name="Churcher C.M."/>
            <person name="Collins M."/>
            <person name="Connor R."/>
            <person name="Cronin A."/>
            <person name="Davis P."/>
            <person name="Feltwell T."/>
            <person name="Fraser A."/>
            <person name="Gentles S."/>
            <person name="Goble A."/>
            <person name="Hamlin N."/>
            <person name="Harris D.E."/>
            <person name="Hidalgo J."/>
            <person name="Hodgson G."/>
            <person name="Holroyd S."/>
            <person name="Hornsby T."/>
            <person name="Howarth S."/>
            <person name="Huckle E.J."/>
            <person name="Hunt S."/>
            <person name="Jagels K."/>
            <person name="James K.D."/>
            <person name="Jones L."/>
            <person name="Jones M."/>
            <person name="Leather S."/>
            <person name="McDonald S."/>
            <person name="McLean J."/>
            <person name="Mooney P."/>
            <person name="Moule S."/>
            <person name="Mungall K.L."/>
            <person name="Murphy L.D."/>
            <person name="Niblett D."/>
            <person name="Odell C."/>
            <person name="Oliver K."/>
            <person name="O'Neil S."/>
            <person name="Pearson D."/>
            <person name="Quail M.A."/>
            <person name="Rabbinowitsch E."/>
            <person name="Rutherford K.M."/>
            <person name="Rutter S."/>
            <person name="Saunders D."/>
            <person name="Seeger K."/>
            <person name="Sharp S."/>
            <person name="Skelton J."/>
            <person name="Simmonds M.N."/>
            <person name="Squares R."/>
            <person name="Squares S."/>
            <person name="Stevens K."/>
            <person name="Taylor K."/>
            <person name="Taylor R.G."/>
            <person name="Tivey A."/>
            <person name="Walsh S.V."/>
            <person name="Warren T."/>
            <person name="Whitehead S."/>
            <person name="Woodward J.R."/>
            <person name="Volckaert G."/>
            <person name="Aert R."/>
            <person name="Robben J."/>
            <person name="Grymonprez B."/>
            <person name="Weltjens I."/>
            <person name="Vanstreels E."/>
            <person name="Rieger M."/>
            <person name="Schaefer M."/>
            <person name="Mueller-Auer S."/>
            <person name="Gabel C."/>
            <person name="Fuchs M."/>
            <person name="Duesterhoeft A."/>
            <person name="Fritzc C."/>
            <person name="Holzer E."/>
            <person name="Moestl D."/>
            <person name="Hilbert H."/>
            <person name="Borzym K."/>
            <person name="Langer I."/>
            <person name="Beck A."/>
            <person name="Lehrach H."/>
            <person name="Reinhardt R."/>
            <person name="Pohl T.M."/>
            <person name="Eger P."/>
            <person name="Zimmermann W."/>
            <person name="Wedler H."/>
            <person name="Wambutt R."/>
            <person name="Purnelle B."/>
            <person name="Goffeau A."/>
            <person name="Cadieu E."/>
            <person name="Dreano S."/>
            <person name="Gloux S."/>
            <person name="Lelaure V."/>
            <person name="Mottier S."/>
            <person name="Galibert F."/>
            <person name="Aves S.J."/>
            <person name="Xiang Z."/>
            <person name="Hunt C."/>
            <person name="Moore K."/>
            <person name="Hurst S.M."/>
            <person name="Lucas M."/>
            <person name="Rochet M."/>
            <person name="Gaillardin C."/>
            <person name="Tallada V.A."/>
            <person name="Garzon A."/>
            <person name="Thode G."/>
            <person name="Daga R.R."/>
            <person name="Cruzado L."/>
            <person name="Jimenez J."/>
            <person name="Sanchez M."/>
            <person name="del Rey F."/>
            <person name="Benito J."/>
            <person name="Dominguez A."/>
            <person name="Revuelta J.L."/>
            <person name="Moreno S."/>
            <person name="Armstrong J."/>
            <person name="Forsburg S.L."/>
            <person name="Cerutti L."/>
            <person name="Lowe T."/>
            <person name="McCombie W.R."/>
            <person name="Paulsen I."/>
            <person name="Potashkin J."/>
            <person name="Shpakovski G.V."/>
            <person name="Ussery D."/>
            <person name="Barrell B.G."/>
            <person name="Nurse P."/>
        </authorList>
    </citation>
    <scope>NUCLEOTIDE SEQUENCE [LARGE SCALE GENOMIC DNA]</scope>
    <source>
        <strain>972 / ATCC 24843</strain>
    </source>
</reference>
<reference key="3">
    <citation type="journal article" date="1998" name="J. Biol. Chem.">
        <title>Fission yeast mitotic regulator Dsk1 is an SR protein-specific kinase.</title>
        <authorList>
            <person name="Tang Z."/>
            <person name="Yanagida M."/>
            <person name="Lin R.-J."/>
        </authorList>
    </citation>
    <scope>FUNCTION</scope>
</reference>